<reference key="1">
    <citation type="journal article" date="2008" name="PLoS ONE">
        <title>Environmental adaptation: genomic analysis of the piezotolerant and psychrotolerant deep-sea iron reducing bacterium Shewanella piezotolerans WP3.</title>
        <authorList>
            <person name="Wang F."/>
            <person name="Wang J."/>
            <person name="Jian H."/>
            <person name="Zhang B."/>
            <person name="Li S."/>
            <person name="Wang F."/>
            <person name="Zeng X."/>
            <person name="Gao L."/>
            <person name="Bartlett D.H."/>
            <person name="Yu J."/>
            <person name="Hu S."/>
            <person name="Xiao X."/>
        </authorList>
    </citation>
    <scope>NUCLEOTIDE SEQUENCE [LARGE SCALE GENOMIC DNA]</scope>
    <source>
        <strain>WP3 / JCM 13877</strain>
    </source>
</reference>
<keyword id="KW-0949">S-adenosyl-L-methionine</keyword>
<keyword id="KW-0808">Transferase</keyword>
<feature type="chain" id="PRO_1000201369" description="Carboxy-S-adenosyl-L-methionine synthase">
    <location>
        <begin position="1"/>
        <end position="243"/>
    </location>
</feature>
<feature type="binding site" evidence="1">
    <location>
        <position position="40"/>
    </location>
    <ligand>
        <name>S-adenosyl-L-methionine</name>
        <dbReference type="ChEBI" id="CHEBI:59789"/>
    </ligand>
</feature>
<feature type="binding site" evidence="1">
    <location>
        <begin position="65"/>
        <end position="67"/>
    </location>
    <ligand>
        <name>S-adenosyl-L-methionine</name>
        <dbReference type="ChEBI" id="CHEBI:59789"/>
    </ligand>
</feature>
<feature type="binding site" evidence="1">
    <location>
        <begin position="90"/>
        <end position="91"/>
    </location>
    <ligand>
        <name>S-adenosyl-L-methionine</name>
        <dbReference type="ChEBI" id="CHEBI:59789"/>
    </ligand>
</feature>
<feature type="binding site" evidence="1">
    <location>
        <begin position="118"/>
        <end position="119"/>
    </location>
    <ligand>
        <name>S-adenosyl-L-methionine</name>
        <dbReference type="ChEBI" id="CHEBI:59789"/>
    </ligand>
</feature>
<feature type="binding site" evidence="1">
    <location>
        <position position="133"/>
    </location>
    <ligand>
        <name>S-adenosyl-L-methionine</name>
        <dbReference type="ChEBI" id="CHEBI:59789"/>
    </ligand>
</feature>
<feature type="binding site" evidence="1">
    <location>
        <position position="200"/>
    </location>
    <ligand>
        <name>S-adenosyl-L-methionine</name>
        <dbReference type="ChEBI" id="CHEBI:59789"/>
    </ligand>
</feature>
<gene>
    <name evidence="1" type="primary">cmoA</name>
    <name type="ordered locus">swp_2349</name>
</gene>
<dbReference type="EC" id="2.1.3.-" evidence="1"/>
<dbReference type="EMBL" id="CP000472">
    <property type="protein sequence ID" value="ACJ29094.1"/>
    <property type="molecule type" value="Genomic_DNA"/>
</dbReference>
<dbReference type="RefSeq" id="WP_020912454.1">
    <property type="nucleotide sequence ID" value="NC_011566.1"/>
</dbReference>
<dbReference type="SMR" id="B8CNX5"/>
<dbReference type="STRING" id="225849.swp_2349"/>
<dbReference type="KEGG" id="swp:swp_2349"/>
<dbReference type="eggNOG" id="COG2226">
    <property type="taxonomic scope" value="Bacteria"/>
</dbReference>
<dbReference type="HOGENOM" id="CLU_078475_0_0_6"/>
<dbReference type="OrthoDB" id="9779941at2"/>
<dbReference type="Proteomes" id="UP000000753">
    <property type="component" value="Chromosome"/>
</dbReference>
<dbReference type="GO" id="GO:0016743">
    <property type="term" value="F:carboxyl- or carbamoyltransferase activity"/>
    <property type="evidence" value="ECO:0007669"/>
    <property type="project" value="UniProtKB-UniRule"/>
</dbReference>
<dbReference type="GO" id="GO:1904047">
    <property type="term" value="F:S-adenosyl-L-methionine binding"/>
    <property type="evidence" value="ECO:0007669"/>
    <property type="project" value="UniProtKB-UniRule"/>
</dbReference>
<dbReference type="GO" id="GO:0002098">
    <property type="term" value="P:tRNA wobble uridine modification"/>
    <property type="evidence" value="ECO:0007669"/>
    <property type="project" value="InterPro"/>
</dbReference>
<dbReference type="CDD" id="cd02440">
    <property type="entry name" value="AdoMet_MTases"/>
    <property type="match status" value="1"/>
</dbReference>
<dbReference type="Gene3D" id="3.40.50.150">
    <property type="entry name" value="Vaccinia Virus protein VP39"/>
    <property type="match status" value="1"/>
</dbReference>
<dbReference type="HAMAP" id="MF_01589">
    <property type="entry name" value="Cx_SAM_synthase"/>
    <property type="match status" value="1"/>
</dbReference>
<dbReference type="InterPro" id="IPR005271">
    <property type="entry name" value="CmoA"/>
</dbReference>
<dbReference type="InterPro" id="IPR041698">
    <property type="entry name" value="Methyltransf_25"/>
</dbReference>
<dbReference type="InterPro" id="IPR029063">
    <property type="entry name" value="SAM-dependent_MTases_sf"/>
</dbReference>
<dbReference type="NCBIfam" id="TIGR00740">
    <property type="entry name" value="carboxy-S-adenosyl-L-methionine synthase CmoA"/>
    <property type="match status" value="1"/>
</dbReference>
<dbReference type="NCBIfam" id="NF011995">
    <property type="entry name" value="PRK15451.1"/>
    <property type="match status" value="1"/>
</dbReference>
<dbReference type="PANTHER" id="PTHR43861:SF2">
    <property type="entry name" value="CARBOXY-S-ADENOSYL-L-METHIONINE SYNTHASE"/>
    <property type="match status" value="1"/>
</dbReference>
<dbReference type="PANTHER" id="PTHR43861">
    <property type="entry name" value="TRANS-ACONITATE 2-METHYLTRANSFERASE-RELATED"/>
    <property type="match status" value="1"/>
</dbReference>
<dbReference type="Pfam" id="PF13649">
    <property type="entry name" value="Methyltransf_25"/>
    <property type="match status" value="1"/>
</dbReference>
<dbReference type="PIRSF" id="PIRSF006325">
    <property type="entry name" value="MeTrfase_bac"/>
    <property type="match status" value="1"/>
</dbReference>
<dbReference type="SUPFAM" id="SSF53335">
    <property type="entry name" value="S-adenosyl-L-methionine-dependent methyltransferases"/>
    <property type="match status" value="1"/>
</dbReference>
<name>CMOA_SHEPW</name>
<accession>B8CNX5</accession>
<proteinExistence type="inferred from homology"/>
<sequence>MKSSQDDLYAKPYQQVSDFQFDNKVAGVFNDMIRRSVPGYGQIINTIGDLAQKYATPNSKIYDLGCSLGAATLSVRRRVEGRNCQIIAVDNSESMIERCKENLSAYVSETPVKLVCGDIRDIEIENASLVILNFTMQFLAPEHRQSLLKKIYDGLQPGGLLVLSEKLYFEQDKIQSTLDDLHLDFKRANGYSELEISQKRSSLEHVMKPDTLEQHKIRIKQQGFSQFSVWFQCFNFASMVAIK</sequence>
<protein>
    <recommendedName>
        <fullName evidence="1">Carboxy-S-adenosyl-L-methionine synthase</fullName>
        <shortName evidence="1">Cx-SAM synthase</shortName>
        <ecNumber evidence="1">2.1.3.-</ecNumber>
    </recommendedName>
</protein>
<comment type="function">
    <text evidence="1">Catalyzes the conversion of S-adenosyl-L-methionine (SAM) to carboxy-S-adenosyl-L-methionine (Cx-SAM).</text>
</comment>
<comment type="catalytic activity">
    <reaction evidence="1">
        <text>prephenate + S-adenosyl-L-methionine = carboxy-S-adenosyl-L-methionine + 3-phenylpyruvate + H2O</text>
        <dbReference type="Rhea" id="RHEA:51692"/>
        <dbReference type="ChEBI" id="CHEBI:15377"/>
        <dbReference type="ChEBI" id="CHEBI:18005"/>
        <dbReference type="ChEBI" id="CHEBI:29934"/>
        <dbReference type="ChEBI" id="CHEBI:59789"/>
        <dbReference type="ChEBI" id="CHEBI:134278"/>
    </reaction>
</comment>
<comment type="subunit">
    <text evidence="1">Homodimer.</text>
</comment>
<comment type="similarity">
    <text evidence="1">Belongs to the class I-like SAM-binding methyltransferase superfamily. Cx-SAM synthase family.</text>
</comment>
<evidence type="ECO:0000255" key="1">
    <source>
        <dbReference type="HAMAP-Rule" id="MF_01589"/>
    </source>
</evidence>
<organism>
    <name type="scientific">Shewanella piezotolerans (strain WP3 / JCM 13877)</name>
    <dbReference type="NCBI Taxonomy" id="225849"/>
    <lineage>
        <taxon>Bacteria</taxon>
        <taxon>Pseudomonadati</taxon>
        <taxon>Pseudomonadota</taxon>
        <taxon>Gammaproteobacteria</taxon>
        <taxon>Alteromonadales</taxon>
        <taxon>Shewanellaceae</taxon>
        <taxon>Shewanella</taxon>
    </lineage>
</organism>